<protein>
    <recommendedName>
        <fullName evidence="1">Phenylalanine--tRNA ligase alpha subunit</fullName>
        <ecNumber evidence="1">6.1.1.20</ecNumber>
    </recommendedName>
    <alternativeName>
        <fullName evidence="1">Phenylalanyl-tRNA synthetase alpha subunit</fullName>
        <shortName evidence="1">PheRS</shortName>
    </alternativeName>
</protein>
<proteinExistence type="inferred from homology"/>
<name>SYFA_TROWT</name>
<feature type="chain" id="PRO_0000126789" description="Phenylalanine--tRNA ligase alpha subunit">
    <location>
        <begin position="1"/>
        <end position="336"/>
    </location>
</feature>
<feature type="binding site" evidence="1">
    <location>
        <position position="259"/>
    </location>
    <ligand>
        <name>Mg(2+)</name>
        <dbReference type="ChEBI" id="CHEBI:18420"/>
        <note>shared with beta subunit</note>
    </ligand>
</feature>
<keyword id="KW-0030">Aminoacyl-tRNA synthetase</keyword>
<keyword id="KW-0067">ATP-binding</keyword>
<keyword id="KW-0963">Cytoplasm</keyword>
<keyword id="KW-0436">Ligase</keyword>
<keyword id="KW-0460">Magnesium</keyword>
<keyword id="KW-0479">Metal-binding</keyword>
<keyword id="KW-0547">Nucleotide-binding</keyword>
<keyword id="KW-0648">Protein biosynthesis</keyword>
<keyword id="KW-1185">Reference proteome</keyword>
<reference key="1">
    <citation type="journal article" date="2003" name="Genome Res.">
        <title>Tropheryma whipplei twist: a human pathogenic Actinobacteria with a reduced genome.</title>
        <authorList>
            <person name="Raoult D."/>
            <person name="Ogata H."/>
            <person name="Audic S."/>
            <person name="Robert C."/>
            <person name="Suhre K."/>
            <person name="Drancourt M."/>
            <person name="Claverie J.-M."/>
        </authorList>
    </citation>
    <scope>NUCLEOTIDE SEQUENCE [LARGE SCALE GENOMIC DNA]</scope>
    <source>
        <strain>Twist</strain>
    </source>
</reference>
<organism>
    <name type="scientific">Tropheryma whipplei (strain Twist)</name>
    <name type="common">Whipple's bacillus</name>
    <dbReference type="NCBI Taxonomy" id="203267"/>
    <lineage>
        <taxon>Bacteria</taxon>
        <taxon>Bacillati</taxon>
        <taxon>Actinomycetota</taxon>
        <taxon>Actinomycetes</taxon>
        <taxon>Micrococcales</taxon>
        <taxon>Tropherymataceae</taxon>
        <taxon>Tropheryma</taxon>
    </lineage>
</organism>
<evidence type="ECO:0000255" key="1">
    <source>
        <dbReference type="HAMAP-Rule" id="MF_00281"/>
    </source>
</evidence>
<comment type="catalytic activity">
    <reaction evidence="1">
        <text>tRNA(Phe) + L-phenylalanine + ATP = L-phenylalanyl-tRNA(Phe) + AMP + diphosphate + H(+)</text>
        <dbReference type="Rhea" id="RHEA:19413"/>
        <dbReference type="Rhea" id="RHEA-COMP:9668"/>
        <dbReference type="Rhea" id="RHEA-COMP:9699"/>
        <dbReference type="ChEBI" id="CHEBI:15378"/>
        <dbReference type="ChEBI" id="CHEBI:30616"/>
        <dbReference type="ChEBI" id="CHEBI:33019"/>
        <dbReference type="ChEBI" id="CHEBI:58095"/>
        <dbReference type="ChEBI" id="CHEBI:78442"/>
        <dbReference type="ChEBI" id="CHEBI:78531"/>
        <dbReference type="ChEBI" id="CHEBI:456215"/>
        <dbReference type="EC" id="6.1.1.20"/>
    </reaction>
</comment>
<comment type="cofactor">
    <cofactor evidence="1">
        <name>Mg(2+)</name>
        <dbReference type="ChEBI" id="CHEBI:18420"/>
    </cofactor>
    <text evidence="1">Binds 2 magnesium ions per tetramer.</text>
</comment>
<comment type="subunit">
    <text evidence="1">Tetramer of two alpha and two beta subunits.</text>
</comment>
<comment type="subcellular location">
    <subcellularLocation>
        <location evidence="1">Cytoplasm</location>
    </subcellularLocation>
</comment>
<comment type="similarity">
    <text evidence="1">Belongs to the class-II aminoacyl-tRNA synthetase family. Phe-tRNA synthetase alpha subunit type 1 subfamily.</text>
</comment>
<accession>Q83GS9</accession>
<gene>
    <name evidence="1" type="primary">pheS</name>
    <name type="ordered locus">TWT_167</name>
</gene>
<sequence>MDEIQDIEGLTRRALQAISRIDTLRDLTKLKNDNLGSTSWLAKYSASIKILSQEKKPIIGKAVSEARRKILEACQDRDLALRLNAQNEQFTRETLDITALPTRIFPGARHPIHVLQDKILDFFLMRGWSVVEGPELESEWLNFDALNIGPFHPAREESDTIFAEPRSASMLLRTHTSPVQLRALVSNPLPLYCVSSGKVFRSDPLDATHTPVFHQLEGLVCDRNITLGHLKGTVEDLAGYLFGAEVNLRMRCNYFPFTEPSAEFDISRDGIDWTEWGGCGLVNSKVLSMAGIDTVHYTGFAFGFGLERTLQFIHSLSDMRDIVEGDIRFSQQFGLK</sequence>
<dbReference type="EC" id="6.1.1.20" evidence="1"/>
<dbReference type="EMBL" id="AE014184">
    <property type="protein sequence ID" value="AAO44264.1"/>
    <property type="molecule type" value="Genomic_DNA"/>
</dbReference>
<dbReference type="RefSeq" id="WP_011102398.1">
    <property type="nucleotide sequence ID" value="NC_004572.3"/>
</dbReference>
<dbReference type="SMR" id="Q83GS9"/>
<dbReference type="STRING" id="203267.TWT_167"/>
<dbReference type="KEGG" id="twh:TWT_167"/>
<dbReference type="eggNOG" id="COG0016">
    <property type="taxonomic scope" value="Bacteria"/>
</dbReference>
<dbReference type="HOGENOM" id="CLU_025086_0_0_11"/>
<dbReference type="OrthoDB" id="9800719at2"/>
<dbReference type="Proteomes" id="UP000002200">
    <property type="component" value="Chromosome"/>
</dbReference>
<dbReference type="GO" id="GO:0005737">
    <property type="term" value="C:cytoplasm"/>
    <property type="evidence" value="ECO:0007669"/>
    <property type="project" value="UniProtKB-SubCell"/>
</dbReference>
<dbReference type="GO" id="GO:0005524">
    <property type="term" value="F:ATP binding"/>
    <property type="evidence" value="ECO:0007669"/>
    <property type="project" value="UniProtKB-UniRule"/>
</dbReference>
<dbReference type="GO" id="GO:0000287">
    <property type="term" value="F:magnesium ion binding"/>
    <property type="evidence" value="ECO:0007669"/>
    <property type="project" value="UniProtKB-UniRule"/>
</dbReference>
<dbReference type="GO" id="GO:0004826">
    <property type="term" value="F:phenylalanine-tRNA ligase activity"/>
    <property type="evidence" value="ECO:0007669"/>
    <property type="project" value="UniProtKB-UniRule"/>
</dbReference>
<dbReference type="GO" id="GO:0000049">
    <property type="term" value="F:tRNA binding"/>
    <property type="evidence" value="ECO:0007669"/>
    <property type="project" value="InterPro"/>
</dbReference>
<dbReference type="GO" id="GO:0006432">
    <property type="term" value="P:phenylalanyl-tRNA aminoacylation"/>
    <property type="evidence" value="ECO:0007669"/>
    <property type="project" value="UniProtKB-UniRule"/>
</dbReference>
<dbReference type="CDD" id="cd00496">
    <property type="entry name" value="PheRS_alpha_core"/>
    <property type="match status" value="1"/>
</dbReference>
<dbReference type="Gene3D" id="3.30.930.10">
    <property type="entry name" value="Bira Bifunctional Protein, Domain 2"/>
    <property type="match status" value="1"/>
</dbReference>
<dbReference type="HAMAP" id="MF_00281">
    <property type="entry name" value="Phe_tRNA_synth_alpha1"/>
    <property type="match status" value="1"/>
</dbReference>
<dbReference type="InterPro" id="IPR006195">
    <property type="entry name" value="aa-tRNA-synth_II"/>
</dbReference>
<dbReference type="InterPro" id="IPR045864">
    <property type="entry name" value="aa-tRNA-synth_II/BPL/LPL"/>
</dbReference>
<dbReference type="InterPro" id="IPR004529">
    <property type="entry name" value="Phe-tRNA-synth_IIc_asu"/>
</dbReference>
<dbReference type="InterPro" id="IPR004188">
    <property type="entry name" value="Phe-tRNA_ligase_II_N"/>
</dbReference>
<dbReference type="InterPro" id="IPR022911">
    <property type="entry name" value="Phe_tRNA_ligase_alpha1_bac"/>
</dbReference>
<dbReference type="InterPro" id="IPR002319">
    <property type="entry name" value="Phenylalanyl-tRNA_Synthase"/>
</dbReference>
<dbReference type="InterPro" id="IPR010978">
    <property type="entry name" value="tRNA-bd_arm"/>
</dbReference>
<dbReference type="NCBIfam" id="TIGR00468">
    <property type="entry name" value="pheS"/>
    <property type="match status" value="1"/>
</dbReference>
<dbReference type="PANTHER" id="PTHR11538:SF41">
    <property type="entry name" value="PHENYLALANINE--TRNA LIGASE, MITOCHONDRIAL"/>
    <property type="match status" value="1"/>
</dbReference>
<dbReference type="PANTHER" id="PTHR11538">
    <property type="entry name" value="PHENYLALANYL-TRNA SYNTHETASE"/>
    <property type="match status" value="1"/>
</dbReference>
<dbReference type="Pfam" id="PF02912">
    <property type="entry name" value="Phe_tRNA-synt_N"/>
    <property type="match status" value="1"/>
</dbReference>
<dbReference type="Pfam" id="PF01409">
    <property type="entry name" value="tRNA-synt_2d"/>
    <property type="match status" value="1"/>
</dbReference>
<dbReference type="SUPFAM" id="SSF55681">
    <property type="entry name" value="Class II aaRS and biotin synthetases"/>
    <property type="match status" value="1"/>
</dbReference>
<dbReference type="SUPFAM" id="SSF46589">
    <property type="entry name" value="tRNA-binding arm"/>
    <property type="match status" value="1"/>
</dbReference>
<dbReference type="PROSITE" id="PS50862">
    <property type="entry name" value="AA_TRNA_LIGASE_II"/>
    <property type="match status" value="1"/>
</dbReference>